<keyword id="KW-0131">Cell cycle</keyword>
<keyword id="KW-0132">Cell division</keyword>
<keyword id="KW-0574">Periplasm</keyword>
<keyword id="KW-0732">Signal</keyword>
<sequence length="436" mass="47681">MRSFLKPLLTIAAMALGMTAVIPMPAWALVELNVNKGNVEPLPIAITDFQGGDALGAQISQIVTADLKRSGLFAPIDKSAFIEKISNPDAAPRFDDWKVINAQALVTGSVSKEADGRIRAQYRLWDTFAGQQMSGEQFFANDANQRRVAHIIADAIYERLTGEKGYFDTRVVFIDESGAKNARKKRLAIMDQDGANVRYLSDGRSIVLTPRFSPNRQEITYMSYESGQPRVYLLQIETGQRELVGNFPGMTFAPRFSPDGQKVIMSLLRDDGNSNIFAMDLRSRSTTRLTNSTAIDTSPSYSPDGSKVVFTSDRGGRAQIYVMGADGSGQTRISFGDGVYSTPVWSPRGDLIAFTKQTGGEFQIGVMKTDGSGERILSSGFQQEGPTWAPNGRVLMFFRDSNGGPKLVSVDLTGRNEQPIPTANFASDPAWSPLLE</sequence>
<reference key="1">
    <citation type="journal article" date="2000" name="DNA Res.">
        <title>Complete genome structure of the nitrogen-fixing symbiotic bacterium Mesorhizobium loti.</title>
        <authorList>
            <person name="Kaneko T."/>
            <person name="Nakamura Y."/>
            <person name="Sato S."/>
            <person name="Asamizu E."/>
            <person name="Kato T."/>
            <person name="Sasamoto S."/>
            <person name="Watanabe A."/>
            <person name="Idesawa K."/>
            <person name="Ishikawa A."/>
            <person name="Kawashima K."/>
            <person name="Kimura T."/>
            <person name="Kishida Y."/>
            <person name="Kiyokawa C."/>
            <person name="Kohara M."/>
            <person name="Matsumoto M."/>
            <person name="Matsuno A."/>
            <person name="Mochizuki Y."/>
            <person name="Nakayama S."/>
            <person name="Nakazaki N."/>
            <person name="Shimpo S."/>
            <person name="Sugimoto M."/>
            <person name="Takeuchi C."/>
            <person name="Yamada M."/>
            <person name="Tabata S."/>
        </authorList>
    </citation>
    <scope>NUCLEOTIDE SEQUENCE [LARGE SCALE GENOMIC DNA]</scope>
    <source>
        <strain>LMG 29417 / CECT 9101 / MAFF 303099</strain>
    </source>
</reference>
<name>TOLB_RHILO</name>
<accession>Q98F84</accession>
<feature type="signal peptide" evidence="1">
    <location>
        <begin position="1"/>
        <end position="28"/>
    </location>
</feature>
<feature type="chain" id="PRO_0000034677" description="Tol-Pal system protein TolB" evidence="1">
    <location>
        <begin position="29"/>
        <end position="436"/>
    </location>
</feature>
<gene>
    <name evidence="1" type="primary">tolB</name>
    <name type="ordered locus">mll3888</name>
</gene>
<evidence type="ECO:0000255" key="1">
    <source>
        <dbReference type="HAMAP-Rule" id="MF_00671"/>
    </source>
</evidence>
<comment type="function">
    <text evidence="1">Part of the Tol-Pal system, which plays a role in outer membrane invagination during cell division and is important for maintaining outer membrane integrity.</text>
</comment>
<comment type="subunit">
    <text evidence="1">The Tol-Pal system is composed of five core proteins: the inner membrane proteins TolA, TolQ and TolR, the periplasmic protein TolB and the outer membrane protein Pal. They form a network linking the inner and outer membranes and the peptidoglycan layer.</text>
</comment>
<comment type="subcellular location">
    <subcellularLocation>
        <location evidence="1">Periplasm</location>
    </subcellularLocation>
</comment>
<comment type="similarity">
    <text evidence="1">Belongs to the TolB family.</text>
</comment>
<organism>
    <name type="scientific">Mesorhizobium japonicum (strain LMG 29417 / CECT 9101 / MAFF 303099)</name>
    <name type="common">Mesorhizobium loti (strain MAFF 303099)</name>
    <dbReference type="NCBI Taxonomy" id="266835"/>
    <lineage>
        <taxon>Bacteria</taxon>
        <taxon>Pseudomonadati</taxon>
        <taxon>Pseudomonadota</taxon>
        <taxon>Alphaproteobacteria</taxon>
        <taxon>Hyphomicrobiales</taxon>
        <taxon>Phyllobacteriaceae</taxon>
        <taxon>Mesorhizobium</taxon>
    </lineage>
</organism>
<protein>
    <recommendedName>
        <fullName evidence="1">Tol-Pal system protein TolB</fullName>
    </recommendedName>
</protein>
<dbReference type="EMBL" id="BA000012">
    <property type="protein sequence ID" value="BAB50683.1"/>
    <property type="molecule type" value="Genomic_DNA"/>
</dbReference>
<dbReference type="SMR" id="Q98F84"/>
<dbReference type="KEGG" id="mlo:mll3888"/>
<dbReference type="eggNOG" id="COG0823">
    <property type="taxonomic scope" value="Bacteria"/>
</dbReference>
<dbReference type="HOGENOM" id="CLU_047123_0_0_5"/>
<dbReference type="Proteomes" id="UP000000552">
    <property type="component" value="Chromosome"/>
</dbReference>
<dbReference type="GO" id="GO:0042597">
    <property type="term" value="C:periplasmic space"/>
    <property type="evidence" value="ECO:0007669"/>
    <property type="project" value="UniProtKB-SubCell"/>
</dbReference>
<dbReference type="GO" id="GO:0051301">
    <property type="term" value="P:cell division"/>
    <property type="evidence" value="ECO:0007669"/>
    <property type="project" value="UniProtKB-UniRule"/>
</dbReference>
<dbReference type="GO" id="GO:0017038">
    <property type="term" value="P:protein import"/>
    <property type="evidence" value="ECO:0007669"/>
    <property type="project" value="InterPro"/>
</dbReference>
<dbReference type="Gene3D" id="2.120.10.30">
    <property type="entry name" value="TolB, C-terminal domain"/>
    <property type="match status" value="1"/>
</dbReference>
<dbReference type="Gene3D" id="3.40.50.10070">
    <property type="entry name" value="TolB, N-terminal domain"/>
    <property type="match status" value="1"/>
</dbReference>
<dbReference type="HAMAP" id="MF_00671">
    <property type="entry name" value="TolB"/>
    <property type="match status" value="1"/>
</dbReference>
<dbReference type="InterPro" id="IPR011042">
    <property type="entry name" value="6-blade_b-propeller_TolB-like"/>
</dbReference>
<dbReference type="InterPro" id="IPR011659">
    <property type="entry name" value="PD40"/>
</dbReference>
<dbReference type="InterPro" id="IPR014167">
    <property type="entry name" value="Tol-Pal_TolB"/>
</dbReference>
<dbReference type="InterPro" id="IPR007195">
    <property type="entry name" value="TolB_N"/>
</dbReference>
<dbReference type="NCBIfam" id="TIGR02800">
    <property type="entry name" value="propeller_TolB"/>
    <property type="match status" value="1"/>
</dbReference>
<dbReference type="PANTHER" id="PTHR36842:SF1">
    <property type="entry name" value="PROTEIN TOLB"/>
    <property type="match status" value="1"/>
</dbReference>
<dbReference type="PANTHER" id="PTHR36842">
    <property type="entry name" value="PROTEIN TOLB HOMOLOG"/>
    <property type="match status" value="1"/>
</dbReference>
<dbReference type="Pfam" id="PF07676">
    <property type="entry name" value="PD40"/>
    <property type="match status" value="4"/>
</dbReference>
<dbReference type="Pfam" id="PF04052">
    <property type="entry name" value="TolB_N"/>
    <property type="match status" value="1"/>
</dbReference>
<dbReference type="SUPFAM" id="SSF52964">
    <property type="entry name" value="TolB, N-terminal domain"/>
    <property type="match status" value="1"/>
</dbReference>
<dbReference type="SUPFAM" id="SSF69304">
    <property type="entry name" value="Tricorn protease N-terminal domain"/>
    <property type="match status" value="1"/>
</dbReference>
<proteinExistence type="inferred from homology"/>